<comment type="function">
    <text evidence="1">Catalyzes the radical-mediated insertion of two sulfur atoms into the C-6 and C-8 positions of the octanoyl moiety bound to the lipoyl domains of lipoate-dependent enzymes, thereby converting the octanoylated domains into lipoylated derivatives.</text>
</comment>
<comment type="catalytic activity">
    <reaction evidence="1">
        <text>[[Fe-S] cluster scaffold protein carrying a second [4Fe-4S](2+) cluster] + N(6)-octanoyl-L-lysyl-[protein] + 2 oxidized [2Fe-2S]-[ferredoxin] + 2 S-adenosyl-L-methionine + 4 H(+) = [[Fe-S] cluster scaffold protein] + N(6)-[(R)-dihydrolipoyl]-L-lysyl-[protein] + 4 Fe(3+) + 2 hydrogen sulfide + 2 5'-deoxyadenosine + 2 L-methionine + 2 reduced [2Fe-2S]-[ferredoxin]</text>
        <dbReference type="Rhea" id="RHEA:16585"/>
        <dbReference type="Rhea" id="RHEA-COMP:9928"/>
        <dbReference type="Rhea" id="RHEA-COMP:10000"/>
        <dbReference type="Rhea" id="RHEA-COMP:10001"/>
        <dbReference type="Rhea" id="RHEA-COMP:10475"/>
        <dbReference type="Rhea" id="RHEA-COMP:14568"/>
        <dbReference type="Rhea" id="RHEA-COMP:14569"/>
        <dbReference type="ChEBI" id="CHEBI:15378"/>
        <dbReference type="ChEBI" id="CHEBI:17319"/>
        <dbReference type="ChEBI" id="CHEBI:29034"/>
        <dbReference type="ChEBI" id="CHEBI:29919"/>
        <dbReference type="ChEBI" id="CHEBI:33722"/>
        <dbReference type="ChEBI" id="CHEBI:33737"/>
        <dbReference type="ChEBI" id="CHEBI:33738"/>
        <dbReference type="ChEBI" id="CHEBI:57844"/>
        <dbReference type="ChEBI" id="CHEBI:59789"/>
        <dbReference type="ChEBI" id="CHEBI:78809"/>
        <dbReference type="ChEBI" id="CHEBI:83100"/>
        <dbReference type="EC" id="2.8.1.8"/>
    </reaction>
</comment>
<comment type="cofactor">
    <cofactor evidence="1">
        <name>[4Fe-4S] cluster</name>
        <dbReference type="ChEBI" id="CHEBI:49883"/>
    </cofactor>
    <text evidence="1">Binds 2 [4Fe-4S] clusters per subunit. One cluster is coordinated with 3 cysteines and an exchangeable S-adenosyl-L-methionine.</text>
</comment>
<comment type="pathway">
    <text evidence="1">Protein modification; protein lipoylation via endogenous pathway; protein N(6)-(lipoyl)lysine from octanoyl-[acyl-carrier-protein]: step 2/2.</text>
</comment>
<comment type="subcellular location">
    <subcellularLocation>
        <location evidence="1">Cytoplasm</location>
    </subcellularLocation>
</comment>
<comment type="similarity">
    <text evidence="1">Belongs to the radical SAM superfamily. Lipoyl synthase family.</text>
</comment>
<feature type="chain" id="PRO_1000012194" description="Lipoyl synthase">
    <location>
        <begin position="1"/>
        <end position="322"/>
    </location>
</feature>
<feature type="domain" description="Radical SAM core" evidence="2">
    <location>
        <begin position="72"/>
        <end position="288"/>
    </location>
</feature>
<feature type="region of interest" description="Disordered" evidence="3">
    <location>
        <begin position="1"/>
        <end position="22"/>
    </location>
</feature>
<feature type="compositionally biased region" description="Polar residues" evidence="3">
    <location>
        <begin position="1"/>
        <end position="12"/>
    </location>
</feature>
<feature type="binding site" evidence="1">
    <location>
        <position position="60"/>
    </location>
    <ligand>
        <name>[4Fe-4S] cluster</name>
        <dbReference type="ChEBI" id="CHEBI:49883"/>
        <label>1</label>
    </ligand>
</feature>
<feature type="binding site" evidence="1">
    <location>
        <position position="65"/>
    </location>
    <ligand>
        <name>[4Fe-4S] cluster</name>
        <dbReference type="ChEBI" id="CHEBI:49883"/>
        <label>1</label>
    </ligand>
</feature>
<feature type="binding site" evidence="1">
    <location>
        <position position="71"/>
    </location>
    <ligand>
        <name>[4Fe-4S] cluster</name>
        <dbReference type="ChEBI" id="CHEBI:49883"/>
        <label>1</label>
    </ligand>
</feature>
<feature type="binding site" evidence="1">
    <location>
        <position position="86"/>
    </location>
    <ligand>
        <name>[4Fe-4S] cluster</name>
        <dbReference type="ChEBI" id="CHEBI:49883"/>
        <label>2</label>
        <note>4Fe-4S-S-AdoMet</note>
    </ligand>
</feature>
<feature type="binding site" evidence="1">
    <location>
        <position position="90"/>
    </location>
    <ligand>
        <name>[4Fe-4S] cluster</name>
        <dbReference type="ChEBI" id="CHEBI:49883"/>
        <label>2</label>
        <note>4Fe-4S-S-AdoMet</note>
    </ligand>
</feature>
<feature type="binding site" evidence="1">
    <location>
        <position position="93"/>
    </location>
    <ligand>
        <name>[4Fe-4S] cluster</name>
        <dbReference type="ChEBI" id="CHEBI:49883"/>
        <label>2</label>
        <note>4Fe-4S-S-AdoMet</note>
    </ligand>
</feature>
<feature type="binding site" evidence="1">
    <location>
        <position position="299"/>
    </location>
    <ligand>
        <name>[4Fe-4S] cluster</name>
        <dbReference type="ChEBI" id="CHEBI:49883"/>
        <label>1</label>
    </ligand>
</feature>
<reference key="1">
    <citation type="journal article" date="2005" name="Infect. Immun.">
        <title>Whole-genome analyses of speciation events in pathogenic Brucellae.</title>
        <authorList>
            <person name="Chain P.S."/>
            <person name="Comerci D.J."/>
            <person name="Tolmasky M.E."/>
            <person name="Larimer F.W."/>
            <person name="Malfatti S.A."/>
            <person name="Vergez L.M."/>
            <person name="Aguero F."/>
            <person name="Land M.L."/>
            <person name="Ugalde R.A."/>
            <person name="Garcia E."/>
        </authorList>
    </citation>
    <scope>NUCLEOTIDE SEQUENCE [LARGE SCALE GENOMIC DNA]</scope>
    <source>
        <strain>2308</strain>
    </source>
</reference>
<evidence type="ECO:0000255" key="1">
    <source>
        <dbReference type="HAMAP-Rule" id="MF_00206"/>
    </source>
</evidence>
<evidence type="ECO:0000255" key="2">
    <source>
        <dbReference type="PROSITE-ProRule" id="PRU01266"/>
    </source>
</evidence>
<evidence type="ECO:0000256" key="3">
    <source>
        <dbReference type="SAM" id="MobiDB-lite"/>
    </source>
</evidence>
<gene>
    <name evidence="1" type="primary">lipA</name>
    <name type="ordered locus">BAB1_1147</name>
</gene>
<keyword id="KW-0004">4Fe-4S</keyword>
<keyword id="KW-0963">Cytoplasm</keyword>
<keyword id="KW-0408">Iron</keyword>
<keyword id="KW-0411">Iron-sulfur</keyword>
<keyword id="KW-0479">Metal-binding</keyword>
<keyword id="KW-1185">Reference proteome</keyword>
<keyword id="KW-0949">S-adenosyl-L-methionine</keyword>
<keyword id="KW-0808">Transferase</keyword>
<protein>
    <recommendedName>
        <fullName evidence="1">Lipoyl synthase</fullName>
        <ecNumber evidence="1">2.8.1.8</ecNumber>
    </recommendedName>
    <alternativeName>
        <fullName evidence="1">Lip-syn</fullName>
        <shortName evidence="1">LS</shortName>
    </alternativeName>
    <alternativeName>
        <fullName evidence="1">Lipoate synthase</fullName>
    </alternativeName>
    <alternativeName>
        <fullName evidence="1">Lipoic acid synthase</fullName>
    </alternativeName>
    <alternativeName>
        <fullName evidence="1">Sulfur insertion protein LipA</fullName>
    </alternativeName>
</protein>
<organism>
    <name type="scientific">Brucella abortus (strain 2308)</name>
    <dbReference type="NCBI Taxonomy" id="359391"/>
    <lineage>
        <taxon>Bacteria</taxon>
        <taxon>Pseudomonadati</taxon>
        <taxon>Pseudomonadota</taxon>
        <taxon>Alphaproteobacteria</taxon>
        <taxon>Hyphomicrobiales</taxon>
        <taxon>Brucellaceae</taxon>
        <taxon>Brucella/Ochrobactrum group</taxon>
        <taxon>Brucella</taxon>
    </lineage>
</organism>
<proteinExistence type="inferred from homology"/>
<name>LIPA_BRUA2</name>
<dbReference type="EC" id="2.8.1.8" evidence="1"/>
<dbReference type="EMBL" id="AM040264">
    <property type="protein sequence ID" value="CAJ11103.1"/>
    <property type="molecule type" value="Genomic_DNA"/>
</dbReference>
<dbReference type="RefSeq" id="WP_002964253.1">
    <property type="nucleotide sequence ID" value="NZ_KN046823.1"/>
</dbReference>
<dbReference type="SMR" id="Q2YPV8"/>
<dbReference type="STRING" id="359391.BAB1_1147"/>
<dbReference type="GeneID" id="97533623"/>
<dbReference type="KEGG" id="bmf:BAB1_1147"/>
<dbReference type="PATRIC" id="fig|359391.11.peg.46"/>
<dbReference type="HOGENOM" id="CLU_033144_2_1_5"/>
<dbReference type="PhylomeDB" id="Q2YPV8"/>
<dbReference type="UniPathway" id="UPA00538">
    <property type="reaction ID" value="UER00593"/>
</dbReference>
<dbReference type="Proteomes" id="UP000002719">
    <property type="component" value="Chromosome I"/>
</dbReference>
<dbReference type="GO" id="GO:0005737">
    <property type="term" value="C:cytoplasm"/>
    <property type="evidence" value="ECO:0007669"/>
    <property type="project" value="UniProtKB-SubCell"/>
</dbReference>
<dbReference type="GO" id="GO:0051539">
    <property type="term" value="F:4 iron, 4 sulfur cluster binding"/>
    <property type="evidence" value="ECO:0007669"/>
    <property type="project" value="UniProtKB-UniRule"/>
</dbReference>
<dbReference type="GO" id="GO:0016992">
    <property type="term" value="F:lipoate synthase activity"/>
    <property type="evidence" value="ECO:0007669"/>
    <property type="project" value="UniProtKB-UniRule"/>
</dbReference>
<dbReference type="GO" id="GO:0046872">
    <property type="term" value="F:metal ion binding"/>
    <property type="evidence" value="ECO:0007669"/>
    <property type="project" value="UniProtKB-KW"/>
</dbReference>
<dbReference type="CDD" id="cd01335">
    <property type="entry name" value="Radical_SAM"/>
    <property type="match status" value="1"/>
</dbReference>
<dbReference type="FunFam" id="3.20.20.70:FF:000040">
    <property type="entry name" value="Lipoyl synthase"/>
    <property type="match status" value="1"/>
</dbReference>
<dbReference type="Gene3D" id="3.20.20.70">
    <property type="entry name" value="Aldolase class I"/>
    <property type="match status" value="1"/>
</dbReference>
<dbReference type="HAMAP" id="MF_00206">
    <property type="entry name" value="Lipoyl_synth"/>
    <property type="match status" value="1"/>
</dbReference>
<dbReference type="InterPro" id="IPR013785">
    <property type="entry name" value="Aldolase_TIM"/>
</dbReference>
<dbReference type="InterPro" id="IPR006638">
    <property type="entry name" value="Elp3/MiaA/NifB-like_rSAM"/>
</dbReference>
<dbReference type="InterPro" id="IPR031691">
    <property type="entry name" value="LIAS_N"/>
</dbReference>
<dbReference type="InterPro" id="IPR003698">
    <property type="entry name" value="Lipoyl_synth"/>
</dbReference>
<dbReference type="InterPro" id="IPR007197">
    <property type="entry name" value="rSAM"/>
</dbReference>
<dbReference type="NCBIfam" id="TIGR00510">
    <property type="entry name" value="lipA"/>
    <property type="match status" value="1"/>
</dbReference>
<dbReference type="NCBIfam" id="NF004019">
    <property type="entry name" value="PRK05481.1"/>
    <property type="match status" value="1"/>
</dbReference>
<dbReference type="NCBIfam" id="NF009544">
    <property type="entry name" value="PRK12928.1"/>
    <property type="match status" value="1"/>
</dbReference>
<dbReference type="PANTHER" id="PTHR10949">
    <property type="entry name" value="LIPOYL SYNTHASE"/>
    <property type="match status" value="1"/>
</dbReference>
<dbReference type="PANTHER" id="PTHR10949:SF0">
    <property type="entry name" value="LIPOYL SYNTHASE, MITOCHONDRIAL"/>
    <property type="match status" value="1"/>
</dbReference>
<dbReference type="Pfam" id="PF16881">
    <property type="entry name" value="LIAS_N"/>
    <property type="match status" value="1"/>
</dbReference>
<dbReference type="Pfam" id="PF04055">
    <property type="entry name" value="Radical_SAM"/>
    <property type="match status" value="1"/>
</dbReference>
<dbReference type="PIRSF" id="PIRSF005963">
    <property type="entry name" value="Lipoyl_synth"/>
    <property type="match status" value="1"/>
</dbReference>
<dbReference type="SFLD" id="SFLDF00271">
    <property type="entry name" value="lipoyl_synthase"/>
    <property type="match status" value="1"/>
</dbReference>
<dbReference type="SFLD" id="SFLDG01058">
    <property type="entry name" value="lipoyl_synthase_like"/>
    <property type="match status" value="1"/>
</dbReference>
<dbReference type="SMART" id="SM00729">
    <property type="entry name" value="Elp3"/>
    <property type="match status" value="1"/>
</dbReference>
<dbReference type="SUPFAM" id="SSF102114">
    <property type="entry name" value="Radical SAM enzymes"/>
    <property type="match status" value="1"/>
</dbReference>
<dbReference type="PROSITE" id="PS51918">
    <property type="entry name" value="RADICAL_SAM"/>
    <property type="match status" value="1"/>
</dbReference>
<accession>Q2YPV8</accession>
<sequence>MVTVLNTVNQSGRLRHPEKAHRPDNEVLKKPDWIRVKAPVSRGYGETREIVRSNKLVTVCEEAGCPNIGECWEKKHATFMIMGEICTRACAFCNISTGIPNALDPNEPENIAKAVKQMGLTHVVITSVDRDDLADGGAHHFAEVIKAVREAAPATTIEILTPDFLRKEGALEIVVKARPDVFNHNLETVPSKYLKVRPGARYFHSIRLLQRVKELDPTIFTKSGIMVGLGEERNEILQLMDDLRSADVDFMTIGQYLQPTRKHHPVIRFVKPDEFKSFETIGKTKGFLLVASSPLTRSSHHAGEDFAKLKAAREALYASRAS</sequence>